<sequence length="443" mass="50170">MESLAALYKNHIVTLQERTRDVLARFKLDALLIHSGELFNVFLDDHPYPFKVNPQFKAWVPVTQVPNCWLLVDGVNKPKLWFYLPVDYWHNVEPLPTSFWTEEVEVVALPKADGIGSQLPAARGNIGYIGPVPERALQLDIAASNINPKGVIDYLHYYRAYKTDYELACMREAQKMAVSGHRAAEEAFRSGMSEFDINLAYLTATGHRDTDVPYSNIVALNEHAAVLHYTKLDHQAPSEMRSFLLDAGAEYNGYAADLTRTWSAKSDNDYAHLVKDVNDEQLALIATMKAGVSYVDYHIQFHQRIAKLLRKHQIITDMSEEAMVENDLTGPFMPHGIGHPLGLQVHDVAGFMQDDSGTHLAAPSKYPYLRCTRVLQPRMVLTIEPGIYFIESLLAPWREGPFSKHFNWQKIEALKPFGGIRIEDNVVIHENGVENMTRDLKLA</sequence>
<name>PEPQ_SALEP</name>
<proteinExistence type="inferred from homology"/>
<keyword id="KW-0224">Dipeptidase</keyword>
<keyword id="KW-0378">Hydrolase</keyword>
<keyword id="KW-0464">Manganese</keyword>
<keyword id="KW-0479">Metal-binding</keyword>
<keyword id="KW-0482">Metalloprotease</keyword>
<keyword id="KW-0645">Protease</keyword>
<dbReference type="EC" id="3.4.13.9" evidence="1"/>
<dbReference type="EMBL" id="AM933172">
    <property type="protein sequence ID" value="CAR35354.1"/>
    <property type="molecule type" value="Genomic_DNA"/>
</dbReference>
<dbReference type="RefSeq" id="WP_000444529.1">
    <property type="nucleotide sequence ID" value="NC_011294.1"/>
</dbReference>
<dbReference type="SMR" id="B5QW86"/>
<dbReference type="MEROPS" id="M24.003"/>
<dbReference type="KEGG" id="set:SEN3778"/>
<dbReference type="HOGENOM" id="CLU_050675_0_0_6"/>
<dbReference type="Proteomes" id="UP000000613">
    <property type="component" value="Chromosome"/>
</dbReference>
<dbReference type="GO" id="GO:0005829">
    <property type="term" value="C:cytosol"/>
    <property type="evidence" value="ECO:0007669"/>
    <property type="project" value="TreeGrafter"/>
</dbReference>
<dbReference type="GO" id="GO:0004177">
    <property type="term" value="F:aminopeptidase activity"/>
    <property type="evidence" value="ECO:0007669"/>
    <property type="project" value="TreeGrafter"/>
</dbReference>
<dbReference type="GO" id="GO:0046872">
    <property type="term" value="F:metal ion binding"/>
    <property type="evidence" value="ECO:0007669"/>
    <property type="project" value="UniProtKB-KW"/>
</dbReference>
<dbReference type="GO" id="GO:0008235">
    <property type="term" value="F:metalloexopeptidase activity"/>
    <property type="evidence" value="ECO:0007669"/>
    <property type="project" value="UniProtKB-UniRule"/>
</dbReference>
<dbReference type="GO" id="GO:0016795">
    <property type="term" value="F:phosphoric triester hydrolase activity"/>
    <property type="evidence" value="ECO:0007669"/>
    <property type="project" value="InterPro"/>
</dbReference>
<dbReference type="GO" id="GO:0102009">
    <property type="term" value="F:proline dipeptidase activity"/>
    <property type="evidence" value="ECO:0007669"/>
    <property type="project" value="UniProtKB-EC"/>
</dbReference>
<dbReference type="GO" id="GO:0006508">
    <property type="term" value="P:proteolysis"/>
    <property type="evidence" value="ECO:0007669"/>
    <property type="project" value="UniProtKB-KW"/>
</dbReference>
<dbReference type="CDD" id="cd01087">
    <property type="entry name" value="Prolidase"/>
    <property type="match status" value="1"/>
</dbReference>
<dbReference type="FunFam" id="3.40.350.10:FF:000002">
    <property type="entry name" value="Xaa-Pro dipeptidase"/>
    <property type="match status" value="1"/>
</dbReference>
<dbReference type="FunFam" id="3.90.230.10:FF:000006">
    <property type="entry name" value="Xaa-Pro dipeptidase"/>
    <property type="match status" value="1"/>
</dbReference>
<dbReference type="Gene3D" id="3.90.230.10">
    <property type="entry name" value="Creatinase/methionine aminopeptidase superfamily"/>
    <property type="match status" value="1"/>
</dbReference>
<dbReference type="Gene3D" id="3.40.350.10">
    <property type="entry name" value="Creatinase/prolidase N-terminal domain"/>
    <property type="match status" value="1"/>
</dbReference>
<dbReference type="HAMAP" id="MF_01279">
    <property type="entry name" value="X_Pro_dipeptid"/>
    <property type="match status" value="1"/>
</dbReference>
<dbReference type="InterPro" id="IPR029149">
    <property type="entry name" value="Creatin/AminoP/Spt16_N"/>
</dbReference>
<dbReference type="InterPro" id="IPR036005">
    <property type="entry name" value="Creatinase/aminopeptidase-like"/>
</dbReference>
<dbReference type="InterPro" id="IPR048819">
    <property type="entry name" value="PepQ_N"/>
</dbReference>
<dbReference type="InterPro" id="IPR000994">
    <property type="entry name" value="Pept_M24"/>
</dbReference>
<dbReference type="InterPro" id="IPR001131">
    <property type="entry name" value="Peptidase_M24B_aminopep-P_CS"/>
</dbReference>
<dbReference type="InterPro" id="IPR052433">
    <property type="entry name" value="X-Pro_dipept-like"/>
</dbReference>
<dbReference type="InterPro" id="IPR022846">
    <property type="entry name" value="X_Pro_dipept"/>
</dbReference>
<dbReference type="NCBIfam" id="NF010133">
    <property type="entry name" value="PRK13607.1"/>
    <property type="match status" value="1"/>
</dbReference>
<dbReference type="PANTHER" id="PTHR43226">
    <property type="entry name" value="XAA-PRO AMINOPEPTIDASE 3"/>
    <property type="match status" value="1"/>
</dbReference>
<dbReference type="PANTHER" id="PTHR43226:SF8">
    <property type="entry name" value="XAA-PRO DIPEPTIDASE"/>
    <property type="match status" value="1"/>
</dbReference>
<dbReference type="Pfam" id="PF21216">
    <property type="entry name" value="PepQ_N"/>
    <property type="match status" value="1"/>
</dbReference>
<dbReference type="Pfam" id="PF00557">
    <property type="entry name" value="Peptidase_M24"/>
    <property type="match status" value="1"/>
</dbReference>
<dbReference type="SUPFAM" id="SSF55920">
    <property type="entry name" value="Creatinase/aminopeptidase"/>
    <property type="match status" value="1"/>
</dbReference>
<dbReference type="PROSITE" id="PS00491">
    <property type="entry name" value="PROLINE_PEPTIDASE"/>
    <property type="match status" value="1"/>
</dbReference>
<evidence type="ECO:0000255" key="1">
    <source>
        <dbReference type="HAMAP-Rule" id="MF_01279"/>
    </source>
</evidence>
<protein>
    <recommendedName>
        <fullName evidence="1">Xaa-Pro dipeptidase</fullName>
        <shortName evidence="1">X-Pro dipeptidase</shortName>
        <ecNumber evidence="1">3.4.13.9</ecNumber>
    </recommendedName>
    <alternativeName>
        <fullName evidence="1">Imidodipeptidase</fullName>
    </alternativeName>
    <alternativeName>
        <fullName evidence="1">Proline dipeptidase</fullName>
        <shortName evidence="1">Prolidase</shortName>
    </alternativeName>
</protein>
<gene>
    <name evidence="1" type="primary">pepQ</name>
    <name type="ordered locus">SEN3778</name>
</gene>
<accession>B5QW86</accession>
<reference key="1">
    <citation type="journal article" date="2008" name="Genome Res.">
        <title>Comparative genome analysis of Salmonella enteritidis PT4 and Salmonella gallinarum 287/91 provides insights into evolutionary and host adaptation pathways.</title>
        <authorList>
            <person name="Thomson N.R."/>
            <person name="Clayton D.J."/>
            <person name="Windhorst D."/>
            <person name="Vernikos G."/>
            <person name="Davidson S."/>
            <person name="Churcher C."/>
            <person name="Quail M.A."/>
            <person name="Stevens M."/>
            <person name="Jones M.A."/>
            <person name="Watson M."/>
            <person name="Barron A."/>
            <person name="Layton A."/>
            <person name="Pickard D."/>
            <person name="Kingsley R.A."/>
            <person name="Bignell A."/>
            <person name="Clark L."/>
            <person name="Harris B."/>
            <person name="Ormond D."/>
            <person name="Abdellah Z."/>
            <person name="Brooks K."/>
            <person name="Cherevach I."/>
            <person name="Chillingworth T."/>
            <person name="Woodward J."/>
            <person name="Norberczak H."/>
            <person name="Lord A."/>
            <person name="Arrowsmith C."/>
            <person name="Jagels K."/>
            <person name="Moule S."/>
            <person name="Mungall K."/>
            <person name="Saunders M."/>
            <person name="Whitehead S."/>
            <person name="Chabalgoity J.A."/>
            <person name="Maskell D."/>
            <person name="Humphreys T."/>
            <person name="Roberts M."/>
            <person name="Barrow P.A."/>
            <person name="Dougan G."/>
            <person name="Parkhill J."/>
        </authorList>
    </citation>
    <scope>NUCLEOTIDE SEQUENCE [LARGE SCALE GENOMIC DNA]</scope>
    <source>
        <strain>P125109</strain>
    </source>
</reference>
<organism>
    <name type="scientific">Salmonella enteritidis PT4 (strain P125109)</name>
    <dbReference type="NCBI Taxonomy" id="550537"/>
    <lineage>
        <taxon>Bacteria</taxon>
        <taxon>Pseudomonadati</taxon>
        <taxon>Pseudomonadota</taxon>
        <taxon>Gammaproteobacteria</taxon>
        <taxon>Enterobacterales</taxon>
        <taxon>Enterobacteriaceae</taxon>
        <taxon>Salmonella</taxon>
    </lineage>
</organism>
<feature type="chain" id="PRO_1000140325" description="Xaa-Pro dipeptidase">
    <location>
        <begin position="1"/>
        <end position="443"/>
    </location>
</feature>
<feature type="binding site" evidence="1">
    <location>
        <position position="246"/>
    </location>
    <ligand>
        <name>Mn(2+)</name>
        <dbReference type="ChEBI" id="CHEBI:29035"/>
        <label>2</label>
    </ligand>
</feature>
<feature type="binding site" evidence="1">
    <location>
        <position position="257"/>
    </location>
    <ligand>
        <name>Mn(2+)</name>
        <dbReference type="ChEBI" id="CHEBI:29035"/>
        <label>1</label>
    </ligand>
</feature>
<feature type="binding site" evidence="1">
    <location>
        <position position="257"/>
    </location>
    <ligand>
        <name>Mn(2+)</name>
        <dbReference type="ChEBI" id="CHEBI:29035"/>
        <label>2</label>
    </ligand>
</feature>
<feature type="binding site" evidence="1">
    <location>
        <position position="339"/>
    </location>
    <ligand>
        <name>Mn(2+)</name>
        <dbReference type="ChEBI" id="CHEBI:29035"/>
        <label>1</label>
    </ligand>
</feature>
<feature type="binding site" evidence="1">
    <location>
        <position position="384"/>
    </location>
    <ligand>
        <name>Mn(2+)</name>
        <dbReference type="ChEBI" id="CHEBI:29035"/>
        <label>1</label>
    </ligand>
</feature>
<feature type="binding site" evidence="1">
    <location>
        <position position="423"/>
    </location>
    <ligand>
        <name>Mn(2+)</name>
        <dbReference type="ChEBI" id="CHEBI:29035"/>
        <label>1</label>
    </ligand>
</feature>
<feature type="binding site" evidence="1">
    <location>
        <position position="423"/>
    </location>
    <ligand>
        <name>Mn(2+)</name>
        <dbReference type="ChEBI" id="CHEBI:29035"/>
        <label>2</label>
    </ligand>
</feature>
<comment type="function">
    <text evidence="1">Splits dipeptides with a prolyl residue in the C-terminal position.</text>
</comment>
<comment type="catalytic activity">
    <reaction evidence="1">
        <text>Xaa-L-Pro dipeptide + H2O = an L-alpha-amino acid + L-proline</text>
        <dbReference type="Rhea" id="RHEA:76407"/>
        <dbReference type="ChEBI" id="CHEBI:15377"/>
        <dbReference type="ChEBI" id="CHEBI:59869"/>
        <dbReference type="ChEBI" id="CHEBI:60039"/>
        <dbReference type="ChEBI" id="CHEBI:195196"/>
        <dbReference type="EC" id="3.4.13.9"/>
    </reaction>
</comment>
<comment type="cofactor">
    <cofactor evidence="1">
        <name>Mn(2+)</name>
        <dbReference type="ChEBI" id="CHEBI:29035"/>
    </cofactor>
    <text evidence="1">Binds 2 manganese ions per subunit.</text>
</comment>
<comment type="similarity">
    <text evidence="1">Belongs to the peptidase M24B family. Bacterial-type prolidase subfamily.</text>
</comment>